<feature type="chain" id="PRO_1000073954" description="Adenylosuccinate synthetase">
    <location>
        <begin position="1"/>
        <end position="420"/>
    </location>
</feature>
<feature type="active site" description="Proton acceptor" evidence="1">
    <location>
        <position position="13"/>
    </location>
</feature>
<feature type="active site" description="Proton donor" evidence="1">
    <location>
        <position position="41"/>
    </location>
</feature>
<feature type="binding site" evidence="1">
    <location>
        <begin position="12"/>
        <end position="18"/>
    </location>
    <ligand>
        <name>GTP</name>
        <dbReference type="ChEBI" id="CHEBI:37565"/>
    </ligand>
</feature>
<feature type="binding site" description="in other chain" evidence="1">
    <location>
        <begin position="13"/>
        <end position="16"/>
    </location>
    <ligand>
        <name>IMP</name>
        <dbReference type="ChEBI" id="CHEBI:58053"/>
        <note>ligand shared between dimeric partners</note>
    </ligand>
</feature>
<feature type="binding site" evidence="1">
    <location>
        <position position="13"/>
    </location>
    <ligand>
        <name>Mg(2+)</name>
        <dbReference type="ChEBI" id="CHEBI:18420"/>
    </ligand>
</feature>
<feature type="binding site" description="in other chain" evidence="1">
    <location>
        <begin position="38"/>
        <end position="41"/>
    </location>
    <ligand>
        <name>IMP</name>
        <dbReference type="ChEBI" id="CHEBI:58053"/>
        <note>ligand shared between dimeric partners</note>
    </ligand>
</feature>
<feature type="binding site" evidence="1">
    <location>
        <begin position="40"/>
        <end position="42"/>
    </location>
    <ligand>
        <name>GTP</name>
        <dbReference type="ChEBI" id="CHEBI:37565"/>
    </ligand>
</feature>
<feature type="binding site" evidence="1">
    <location>
        <position position="40"/>
    </location>
    <ligand>
        <name>Mg(2+)</name>
        <dbReference type="ChEBI" id="CHEBI:18420"/>
    </ligand>
</feature>
<feature type="binding site" description="in other chain" evidence="1">
    <location>
        <position position="128"/>
    </location>
    <ligand>
        <name>IMP</name>
        <dbReference type="ChEBI" id="CHEBI:58053"/>
        <note>ligand shared between dimeric partners</note>
    </ligand>
</feature>
<feature type="binding site" evidence="1">
    <location>
        <position position="142"/>
    </location>
    <ligand>
        <name>IMP</name>
        <dbReference type="ChEBI" id="CHEBI:58053"/>
        <note>ligand shared between dimeric partners</note>
    </ligand>
</feature>
<feature type="binding site" description="in other chain" evidence="1">
    <location>
        <position position="221"/>
    </location>
    <ligand>
        <name>IMP</name>
        <dbReference type="ChEBI" id="CHEBI:58053"/>
        <note>ligand shared between dimeric partners</note>
    </ligand>
</feature>
<feature type="binding site" description="in other chain" evidence="1">
    <location>
        <position position="236"/>
    </location>
    <ligand>
        <name>IMP</name>
        <dbReference type="ChEBI" id="CHEBI:58053"/>
        <note>ligand shared between dimeric partners</note>
    </ligand>
</feature>
<feature type="binding site" evidence="1">
    <location>
        <begin position="295"/>
        <end position="301"/>
    </location>
    <ligand>
        <name>substrate</name>
    </ligand>
</feature>
<feature type="binding site" description="in other chain" evidence="1">
    <location>
        <position position="299"/>
    </location>
    <ligand>
        <name>IMP</name>
        <dbReference type="ChEBI" id="CHEBI:58053"/>
        <note>ligand shared between dimeric partners</note>
    </ligand>
</feature>
<feature type="binding site" evidence="1">
    <location>
        <position position="301"/>
    </location>
    <ligand>
        <name>GTP</name>
        <dbReference type="ChEBI" id="CHEBI:37565"/>
    </ligand>
</feature>
<feature type="binding site" evidence="1">
    <location>
        <begin position="327"/>
        <end position="329"/>
    </location>
    <ligand>
        <name>GTP</name>
        <dbReference type="ChEBI" id="CHEBI:37565"/>
    </ligand>
</feature>
<feature type="binding site" evidence="1">
    <location>
        <begin position="399"/>
        <end position="401"/>
    </location>
    <ligand>
        <name>GTP</name>
        <dbReference type="ChEBI" id="CHEBI:37565"/>
    </ligand>
</feature>
<gene>
    <name evidence="1" type="primary">purA</name>
    <name type="ordered locus">Pmob_1365</name>
</gene>
<reference key="1">
    <citation type="submission" date="2007-11" db="EMBL/GenBank/DDBJ databases">
        <title>Complete sequence of Petroga mobilis SJ95.</title>
        <authorList>
            <consortium name="US DOE Joint Genome Institute"/>
            <person name="Copeland A."/>
            <person name="Lucas S."/>
            <person name="Lapidus A."/>
            <person name="Barry K."/>
            <person name="Glavina del Rio T."/>
            <person name="Dalin E."/>
            <person name="Tice H."/>
            <person name="Pitluck S."/>
            <person name="Meincke L."/>
            <person name="Brettin T."/>
            <person name="Bruce D."/>
            <person name="Detter J.C."/>
            <person name="Han C."/>
            <person name="Kuske C.R."/>
            <person name="Schmutz J."/>
            <person name="Larimer F."/>
            <person name="Land M."/>
            <person name="Hauser L."/>
            <person name="Kyrpides N."/>
            <person name="Mikhailova N."/>
            <person name="Noll K."/>
            <person name="Richardson P."/>
        </authorList>
    </citation>
    <scope>NUCLEOTIDE SEQUENCE [LARGE SCALE GENOMIC DNA]</scope>
    <source>
        <strain>DSM 10674 / SJ95</strain>
    </source>
</reference>
<evidence type="ECO:0000255" key="1">
    <source>
        <dbReference type="HAMAP-Rule" id="MF_00011"/>
    </source>
</evidence>
<protein>
    <recommendedName>
        <fullName evidence="1">Adenylosuccinate synthetase</fullName>
        <shortName evidence="1">AMPSase</shortName>
        <shortName evidence="1">AdSS</shortName>
        <ecNumber evidence="1">6.3.4.4</ecNumber>
    </recommendedName>
    <alternativeName>
        <fullName evidence="1">IMP--aspartate ligase</fullName>
    </alternativeName>
</protein>
<comment type="function">
    <text evidence="1">Plays an important role in the de novo pathway of purine nucleotide biosynthesis. Catalyzes the first committed step in the biosynthesis of AMP from IMP.</text>
</comment>
<comment type="catalytic activity">
    <reaction evidence="1">
        <text>IMP + L-aspartate + GTP = N(6)-(1,2-dicarboxyethyl)-AMP + GDP + phosphate + 2 H(+)</text>
        <dbReference type="Rhea" id="RHEA:15753"/>
        <dbReference type="ChEBI" id="CHEBI:15378"/>
        <dbReference type="ChEBI" id="CHEBI:29991"/>
        <dbReference type="ChEBI" id="CHEBI:37565"/>
        <dbReference type="ChEBI" id="CHEBI:43474"/>
        <dbReference type="ChEBI" id="CHEBI:57567"/>
        <dbReference type="ChEBI" id="CHEBI:58053"/>
        <dbReference type="ChEBI" id="CHEBI:58189"/>
        <dbReference type="EC" id="6.3.4.4"/>
    </reaction>
</comment>
<comment type="cofactor">
    <cofactor evidence="1">
        <name>Mg(2+)</name>
        <dbReference type="ChEBI" id="CHEBI:18420"/>
    </cofactor>
    <text evidence="1">Binds 1 Mg(2+) ion per subunit.</text>
</comment>
<comment type="pathway">
    <text evidence="1">Purine metabolism; AMP biosynthesis via de novo pathway; AMP from IMP: step 1/2.</text>
</comment>
<comment type="subunit">
    <text evidence="1">Homodimer.</text>
</comment>
<comment type="subcellular location">
    <subcellularLocation>
        <location evidence="1">Cytoplasm</location>
    </subcellularLocation>
</comment>
<comment type="similarity">
    <text evidence="1">Belongs to the adenylosuccinate synthetase family.</text>
</comment>
<proteinExistence type="inferred from homology"/>
<dbReference type="EC" id="6.3.4.4" evidence="1"/>
<dbReference type="EMBL" id="CP000879">
    <property type="protein sequence ID" value="ABX32069.1"/>
    <property type="molecule type" value="Genomic_DNA"/>
</dbReference>
<dbReference type="RefSeq" id="WP_012209168.1">
    <property type="nucleotide sequence ID" value="NC_010003.1"/>
</dbReference>
<dbReference type="SMR" id="A9BHV4"/>
<dbReference type="STRING" id="403833.Pmob_1365"/>
<dbReference type="KEGG" id="pmo:Pmob_1365"/>
<dbReference type="eggNOG" id="COG0104">
    <property type="taxonomic scope" value="Bacteria"/>
</dbReference>
<dbReference type="HOGENOM" id="CLU_029848_0_0_0"/>
<dbReference type="OrthoDB" id="9807553at2"/>
<dbReference type="UniPathway" id="UPA00075">
    <property type="reaction ID" value="UER00335"/>
</dbReference>
<dbReference type="Proteomes" id="UP000000789">
    <property type="component" value="Chromosome"/>
</dbReference>
<dbReference type="GO" id="GO:0005737">
    <property type="term" value="C:cytoplasm"/>
    <property type="evidence" value="ECO:0007669"/>
    <property type="project" value="UniProtKB-SubCell"/>
</dbReference>
<dbReference type="GO" id="GO:0004019">
    <property type="term" value="F:adenylosuccinate synthase activity"/>
    <property type="evidence" value="ECO:0007669"/>
    <property type="project" value="UniProtKB-UniRule"/>
</dbReference>
<dbReference type="GO" id="GO:0005525">
    <property type="term" value="F:GTP binding"/>
    <property type="evidence" value="ECO:0007669"/>
    <property type="project" value="UniProtKB-UniRule"/>
</dbReference>
<dbReference type="GO" id="GO:0000287">
    <property type="term" value="F:magnesium ion binding"/>
    <property type="evidence" value="ECO:0007669"/>
    <property type="project" value="UniProtKB-UniRule"/>
</dbReference>
<dbReference type="GO" id="GO:0044208">
    <property type="term" value="P:'de novo' AMP biosynthetic process"/>
    <property type="evidence" value="ECO:0007669"/>
    <property type="project" value="UniProtKB-UniRule"/>
</dbReference>
<dbReference type="GO" id="GO:0046040">
    <property type="term" value="P:IMP metabolic process"/>
    <property type="evidence" value="ECO:0007669"/>
    <property type="project" value="TreeGrafter"/>
</dbReference>
<dbReference type="CDD" id="cd03108">
    <property type="entry name" value="AdSS"/>
    <property type="match status" value="1"/>
</dbReference>
<dbReference type="FunFam" id="1.10.300.10:FF:000001">
    <property type="entry name" value="Adenylosuccinate synthetase"/>
    <property type="match status" value="1"/>
</dbReference>
<dbReference type="FunFam" id="3.90.170.10:FF:000001">
    <property type="entry name" value="Adenylosuccinate synthetase"/>
    <property type="match status" value="1"/>
</dbReference>
<dbReference type="Gene3D" id="3.40.440.10">
    <property type="entry name" value="Adenylosuccinate Synthetase, subunit A, domain 1"/>
    <property type="match status" value="1"/>
</dbReference>
<dbReference type="Gene3D" id="1.10.300.10">
    <property type="entry name" value="Adenylosuccinate Synthetase, subunit A, domain 2"/>
    <property type="match status" value="1"/>
</dbReference>
<dbReference type="Gene3D" id="3.90.170.10">
    <property type="entry name" value="Adenylosuccinate Synthetase, subunit A, domain 3"/>
    <property type="match status" value="1"/>
</dbReference>
<dbReference type="HAMAP" id="MF_00011">
    <property type="entry name" value="Adenylosucc_synth"/>
    <property type="match status" value="1"/>
</dbReference>
<dbReference type="InterPro" id="IPR018220">
    <property type="entry name" value="Adenylosuccin_syn_GTP-bd"/>
</dbReference>
<dbReference type="InterPro" id="IPR033128">
    <property type="entry name" value="Adenylosuccin_syn_Lys_AS"/>
</dbReference>
<dbReference type="InterPro" id="IPR042109">
    <property type="entry name" value="Adenylosuccinate_synth_dom1"/>
</dbReference>
<dbReference type="InterPro" id="IPR042110">
    <property type="entry name" value="Adenylosuccinate_synth_dom2"/>
</dbReference>
<dbReference type="InterPro" id="IPR042111">
    <property type="entry name" value="Adenylosuccinate_synth_dom3"/>
</dbReference>
<dbReference type="InterPro" id="IPR001114">
    <property type="entry name" value="Adenylosuccinate_synthetase"/>
</dbReference>
<dbReference type="InterPro" id="IPR027417">
    <property type="entry name" value="P-loop_NTPase"/>
</dbReference>
<dbReference type="NCBIfam" id="NF002223">
    <property type="entry name" value="PRK01117.1"/>
    <property type="match status" value="1"/>
</dbReference>
<dbReference type="NCBIfam" id="NF010355">
    <property type="entry name" value="PRK13783.1"/>
    <property type="match status" value="1"/>
</dbReference>
<dbReference type="NCBIfam" id="TIGR00184">
    <property type="entry name" value="purA"/>
    <property type="match status" value="1"/>
</dbReference>
<dbReference type="PANTHER" id="PTHR11846">
    <property type="entry name" value="ADENYLOSUCCINATE SYNTHETASE"/>
    <property type="match status" value="1"/>
</dbReference>
<dbReference type="PANTHER" id="PTHR11846:SF0">
    <property type="entry name" value="ADENYLOSUCCINATE SYNTHETASE"/>
    <property type="match status" value="1"/>
</dbReference>
<dbReference type="Pfam" id="PF00709">
    <property type="entry name" value="Adenylsucc_synt"/>
    <property type="match status" value="1"/>
</dbReference>
<dbReference type="SMART" id="SM00788">
    <property type="entry name" value="Adenylsucc_synt"/>
    <property type="match status" value="1"/>
</dbReference>
<dbReference type="SUPFAM" id="SSF52540">
    <property type="entry name" value="P-loop containing nucleoside triphosphate hydrolases"/>
    <property type="match status" value="1"/>
</dbReference>
<dbReference type="PROSITE" id="PS01266">
    <property type="entry name" value="ADENYLOSUCCIN_SYN_1"/>
    <property type="match status" value="1"/>
</dbReference>
<dbReference type="PROSITE" id="PS00513">
    <property type="entry name" value="ADENYLOSUCCIN_SYN_2"/>
    <property type="match status" value="1"/>
</dbReference>
<accession>A9BHV4</accession>
<organism>
    <name type="scientific">Petrotoga mobilis (strain DSM 10674 / SJ95)</name>
    <dbReference type="NCBI Taxonomy" id="403833"/>
    <lineage>
        <taxon>Bacteria</taxon>
        <taxon>Thermotogati</taxon>
        <taxon>Thermotogota</taxon>
        <taxon>Thermotogae</taxon>
        <taxon>Petrotogales</taxon>
        <taxon>Petrotogaceae</taxon>
        <taxon>Petrotoga</taxon>
    </lineage>
</organism>
<sequence length="420" mass="47564">MKKMSIVGAQWGDEGKGKVVNYFSEKFEWIVRFSGGANAGHTIYYKDKKYVNHMLPSIMPNSQSKGFLGAGMVLDLEKLVEELNILEADFPGMSSKFYIDLEAFLVLPWHKEEDEIIESMRKKPIGTTKRGIGPAYTDKVSREGIKLYYLFDEKMLKERLEDIYYLKSSLYGNKLKTSKDDVFEYLMKTKNELEKLKINYASAVEMGNVFRSTSVLFEGAQGVLLDLDFGTYPFVTSSSCMAHGVSSVGFSTFELDEVYGVLKAYTTRVGSGPFPTEIFGEEAHKIRELGKEYGATTGRPRRVGWLDLPALRYAKIRSGLTGLVITKADVLNGLDKIKVCTHYEVNGKTKDTPSSSYDFFVAKPIYTELNGWKDTNDINFLKYLSYIEEQIGVDIDYISYGPKTEEMCSKNDLILNMENK</sequence>
<keyword id="KW-0963">Cytoplasm</keyword>
<keyword id="KW-0342">GTP-binding</keyword>
<keyword id="KW-0436">Ligase</keyword>
<keyword id="KW-0460">Magnesium</keyword>
<keyword id="KW-0479">Metal-binding</keyword>
<keyword id="KW-0547">Nucleotide-binding</keyword>
<keyword id="KW-0658">Purine biosynthesis</keyword>
<name>PURA_PETMO</name>